<name>AMPA_NITWN</name>
<reference key="1">
    <citation type="journal article" date="2006" name="Appl. Environ. Microbiol.">
        <title>Genome sequence of the chemolithoautotrophic nitrite-oxidizing bacterium Nitrobacter winogradskyi Nb-255.</title>
        <authorList>
            <person name="Starkenburg S.R."/>
            <person name="Chain P.S.G."/>
            <person name="Sayavedra-Soto L.A."/>
            <person name="Hauser L."/>
            <person name="Land M.L."/>
            <person name="Larimer F.W."/>
            <person name="Malfatti S.A."/>
            <person name="Klotz M.G."/>
            <person name="Bottomley P.J."/>
            <person name="Arp D.J."/>
            <person name="Hickey W.J."/>
        </authorList>
    </citation>
    <scope>NUCLEOTIDE SEQUENCE [LARGE SCALE GENOMIC DNA]</scope>
    <source>
        <strain>ATCC 25391 / DSM 10237 / CIP 104748 / NCIMB 11846 / Nb-255</strain>
    </source>
</reference>
<sequence length="500" mass="52815">MPDAVKVGFVPFSTASRGTLVVFCDETLKFGRAAGKALGSSAGLVKRAAAANQFKGKSATTLDILAPEGLKADRLIVVGVGKTPALKSSDFLKLGGVIAGKVRSDNNGVTIIAELPSATMEPDLSASLASGIRLRAYKFDRYKTRKKEGDDAVNRADVSIAVADVAAAKKAFAPVNHVVNGVIIARDLVNEPPNVLYPEEFARRASRLRAMGVGIDVLDVKAMTKLGMGALLGVGQGSARPSRTVVMRWNGGKKGEPPVAFVGKGVCFDTGGISIKPANGMEEMKGDMGGAACVVGLMHALAARKAKVNAIGAIGIVENMPDGSAQRPGDIVTSMSGQTIEIINTDAEGRLVLADVLWYVARKFKPKVMIDLATLTGAIMVALGTEHAGLFSNNDELSERLTRAGLDTGERVWRMPLAPEYDKLIDSKFADMKNTGGRHGGSITAAQFLQRFVDDTPWAHLDIAGTAMGAPKSDINQSWGSGFGVRLLDRLVAEHYETKR</sequence>
<comment type="function">
    <text evidence="1">Presumably involved in the processing and regular turnover of intracellular proteins. Catalyzes the removal of unsubstituted N-terminal amino acids from various peptides.</text>
</comment>
<comment type="catalytic activity">
    <reaction evidence="1">
        <text>Release of an N-terminal amino acid, Xaa-|-Yaa-, in which Xaa is preferably Leu, but may be other amino acids including Pro although not Arg or Lys, and Yaa may be Pro. Amino acid amides and methyl esters are also readily hydrolyzed, but rates on arylamides are exceedingly low.</text>
        <dbReference type="EC" id="3.4.11.1"/>
    </reaction>
</comment>
<comment type="catalytic activity">
    <reaction evidence="1">
        <text>Release of an N-terminal amino acid, preferentially leucine, but not glutamic or aspartic acids.</text>
        <dbReference type="EC" id="3.4.11.10"/>
    </reaction>
</comment>
<comment type="cofactor">
    <cofactor evidence="1">
        <name>Mn(2+)</name>
        <dbReference type="ChEBI" id="CHEBI:29035"/>
    </cofactor>
    <text evidence="1">Binds 2 manganese ions per subunit.</text>
</comment>
<comment type="subcellular location">
    <subcellularLocation>
        <location evidence="1">Cytoplasm</location>
    </subcellularLocation>
</comment>
<comment type="similarity">
    <text evidence="1">Belongs to the peptidase M17 family.</text>
</comment>
<evidence type="ECO:0000255" key="1">
    <source>
        <dbReference type="HAMAP-Rule" id="MF_00181"/>
    </source>
</evidence>
<gene>
    <name evidence="1" type="primary">pepA</name>
    <name type="ordered locus">Nwi_1676</name>
</gene>
<proteinExistence type="inferred from homology"/>
<keyword id="KW-0031">Aminopeptidase</keyword>
<keyword id="KW-0963">Cytoplasm</keyword>
<keyword id="KW-0378">Hydrolase</keyword>
<keyword id="KW-0464">Manganese</keyword>
<keyword id="KW-0479">Metal-binding</keyword>
<keyword id="KW-0645">Protease</keyword>
<keyword id="KW-1185">Reference proteome</keyword>
<dbReference type="EC" id="3.4.11.1" evidence="1"/>
<dbReference type="EC" id="3.4.11.10" evidence="1"/>
<dbReference type="EMBL" id="CP000115">
    <property type="protein sequence ID" value="ABA04937.1"/>
    <property type="molecule type" value="Genomic_DNA"/>
</dbReference>
<dbReference type="RefSeq" id="WP_011314936.1">
    <property type="nucleotide sequence ID" value="NC_007406.1"/>
</dbReference>
<dbReference type="SMR" id="Q3SS04"/>
<dbReference type="STRING" id="323098.Nwi_1676"/>
<dbReference type="KEGG" id="nwi:Nwi_1676"/>
<dbReference type="eggNOG" id="COG0260">
    <property type="taxonomic scope" value="Bacteria"/>
</dbReference>
<dbReference type="HOGENOM" id="CLU_013734_6_0_5"/>
<dbReference type="OrthoDB" id="9809354at2"/>
<dbReference type="Proteomes" id="UP000002531">
    <property type="component" value="Chromosome"/>
</dbReference>
<dbReference type="GO" id="GO:0005737">
    <property type="term" value="C:cytoplasm"/>
    <property type="evidence" value="ECO:0007669"/>
    <property type="project" value="UniProtKB-SubCell"/>
</dbReference>
<dbReference type="GO" id="GO:0030145">
    <property type="term" value="F:manganese ion binding"/>
    <property type="evidence" value="ECO:0007669"/>
    <property type="project" value="UniProtKB-UniRule"/>
</dbReference>
<dbReference type="GO" id="GO:0070006">
    <property type="term" value="F:metalloaminopeptidase activity"/>
    <property type="evidence" value="ECO:0007669"/>
    <property type="project" value="InterPro"/>
</dbReference>
<dbReference type="GO" id="GO:0006508">
    <property type="term" value="P:proteolysis"/>
    <property type="evidence" value="ECO:0007669"/>
    <property type="project" value="UniProtKB-KW"/>
</dbReference>
<dbReference type="CDD" id="cd00433">
    <property type="entry name" value="Peptidase_M17"/>
    <property type="match status" value="1"/>
</dbReference>
<dbReference type="Gene3D" id="3.40.220.10">
    <property type="entry name" value="Leucine Aminopeptidase, subunit E, domain 1"/>
    <property type="match status" value="1"/>
</dbReference>
<dbReference type="Gene3D" id="3.40.630.10">
    <property type="entry name" value="Zn peptidases"/>
    <property type="match status" value="1"/>
</dbReference>
<dbReference type="HAMAP" id="MF_00181">
    <property type="entry name" value="Cytosol_peptidase_M17"/>
    <property type="match status" value="1"/>
</dbReference>
<dbReference type="InterPro" id="IPR011356">
    <property type="entry name" value="Leucine_aapep/pepB"/>
</dbReference>
<dbReference type="InterPro" id="IPR043472">
    <property type="entry name" value="Macro_dom-like"/>
</dbReference>
<dbReference type="InterPro" id="IPR000819">
    <property type="entry name" value="Peptidase_M17_C"/>
</dbReference>
<dbReference type="InterPro" id="IPR023042">
    <property type="entry name" value="Peptidase_M17_leu_NH2_pept"/>
</dbReference>
<dbReference type="InterPro" id="IPR008283">
    <property type="entry name" value="Peptidase_M17_N"/>
</dbReference>
<dbReference type="NCBIfam" id="NF002073">
    <property type="entry name" value="PRK00913.1-2"/>
    <property type="match status" value="1"/>
</dbReference>
<dbReference type="NCBIfam" id="NF002074">
    <property type="entry name" value="PRK00913.1-4"/>
    <property type="match status" value="1"/>
</dbReference>
<dbReference type="NCBIfam" id="NF002075">
    <property type="entry name" value="PRK00913.2-2"/>
    <property type="match status" value="1"/>
</dbReference>
<dbReference type="NCBIfam" id="NF002077">
    <property type="entry name" value="PRK00913.2-4"/>
    <property type="match status" value="1"/>
</dbReference>
<dbReference type="NCBIfam" id="NF002083">
    <property type="entry name" value="PRK00913.3-5"/>
    <property type="match status" value="1"/>
</dbReference>
<dbReference type="PANTHER" id="PTHR11963:SF23">
    <property type="entry name" value="CYTOSOL AMINOPEPTIDASE"/>
    <property type="match status" value="1"/>
</dbReference>
<dbReference type="PANTHER" id="PTHR11963">
    <property type="entry name" value="LEUCINE AMINOPEPTIDASE-RELATED"/>
    <property type="match status" value="1"/>
</dbReference>
<dbReference type="Pfam" id="PF00883">
    <property type="entry name" value="Peptidase_M17"/>
    <property type="match status" value="1"/>
</dbReference>
<dbReference type="Pfam" id="PF02789">
    <property type="entry name" value="Peptidase_M17_N"/>
    <property type="match status" value="1"/>
</dbReference>
<dbReference type="PRINTS" id="PR00481">
    <property type="entry name" value="LAMNOPPTDASE"/>
</dbReference>
<dbReference type="SUPFAM" id="SSF52949">
    <property type="entry name" value="Macro domain-like"/>
    <property type="match status" value="1"/>
</dbReference>
<dbReference type="SUPFAM" id="SSF53187">
    <property type="entry name" value="Zn-dependent exopeptidases"/>
    <property type="match status" value="1"/>
</dbReference>
<dbReference type="PROSITE" id="PS00631">
    <property type="entry name" value="CYTOSOL_AP"/>
    <property type="match status" value="1"/>
</dbReference>
<accession>Q3SS04</accession>
<feature type="chain" id="PRO_1000019946" description="Probable cytosol aminopeptidase">
    <location>
        <begin position="1"/>
        <end position="500"/>
    </location>
</feature>
<feature type="active site" evidence="1">
    <location>
        <position position="276"/>
    </location>
</feature>
<feature type="active site" evidence="1">
    <location>
        <position position="350"/>
    </location>
</feature>
<feature type="binding site" evidence="1">
    <location>
        <position position="264"/>
    </location>
    <ligand>
        <name>Mn(2+)</name>
        <dbReference type="ChEBI" id="CHEBI:29035"/>
        <label>2</label>
    </ligand>
</feature>
<feature type="binding site" evidence="1">
    <location>
        <position position="269"/>
    </location>
    <ligand>
        <name>Mn(2+)</name>
        <dbReference type="ChEBI" id="CHEBI:29035"/>
        <label>1</label>
    </ligand>
</feature>
<feature type="binding site" evidence="1">
    <location>
        <position position="269"/>
    </location>
    <ligand>
        <name>Mn(2+)</name>
        <dbReference type="ChEBI" id="CHEBI:29035"/>
        <label>2</label>
    </ligand>
</feature>
<feature type="binding site" evidence="1">
    <location>
        <position position="287"/>
    </location>
    <ligand>
        <name>Mn(2+)</name>
        <dbReference type="ChEBI" id="CHEBI:29035"/>
        <label>2</label>
    </ligand>
</feature>
<feature type="binding site" evidence="1">
    <location>
        <position position="346"/>
    </location>
    <ligand>
        <name>Mn(2+)</name>
        <dbReference type="ChEBI" id="CHEBI:29035"/>
        <label>1</label>
    </ligand>
</feature>
<feature type="binding site" evidence="1">
    <location>
        <position position="348"/>
    </location>
    <ligand>
        <name>Mn(2+)</name>
        <dbReference type="ChEBI" id="CHEBI:29035"/>
        <label>1</label>
    </ligand>
</feature>
<feature type="binding site" evidence="1">
    <location>
        <position position="348"/>
    </location>
    <ligand>
        <name>Mn(2+)</name>
        <dbReference type="ChEBI" id="CHEBI:29035"/>
        <label>2</label>
    </ligand>
</feature>
<protein>
    <recommendedName>
        <fullName evidence="1">Probable cytosol aminopeptidase</fullName>
        <ecNumber evidence="1">3.4.11.1</ecNumber>
    </recommendedName>
    <alternativeName>
        <fullName evidence="1">Leucine aminopeptidase</fullName>
        <shortName evidence="1">LAP</shortName>
        <ecNumber evidence="1">3.4.11.10</ecNumber>
    </alternativeName>
    <alternativeName>
        <fullName evidence="1">Leucyl aminopeptidase</fullName>
    </alternativeName>
</protein>
<organism>
    <name type="scientific">Nitrobacter winogradskyi (strain ATCC 25391 / DSM 10237 / CIP 104748 / NCIMB 11846 / Nb-255)</name>
    <dbReference type="NCBI Taxonomy" id="323098"/>
    <lineage>
        <taxon>Bacteria</taxon>
        <taxon>Pseudomonadati</taxon>
        <taxon>Pseudomonadota</taxon>
        <taxon>Alphaproteobacteria</taxon>
        <taxon>Hyphomicrobiales</taxon>
        <taxon>Nitrobacteraceae</taxon>
        <taxon>Nitrobacter</taxon>
    </lineage>
</organism>